<evidence type="ECO:0000250" key="1"/>
<evidence type="ECO:0000305" key="2"/>
<protein>
    <recommendedName>
        <fullName>Ras-related protein RABA6a</fullName>
        <shortName>AtRABA6a</shortName>
    </recommendedName>
</protein>
<sequence>MAEDTYEEECDYLFKAVLIGDSAVGKSNLLSRFSKDEFRFDSKPTIGVEFAYRNVHVGDKIIKAQIWDTAGQERFRAITSSYYRGALGALLIYDITRRTTFDNIKKWLFELRDFANPETVVVLVGNKSDLRQSREVEEDEGKTLAESEGLYFLETSALENVNVEEAFLVMIGRIHEVVTQRIASENKSNGAATPHINGNGNGTVLPVGKEIVNIHEVTATQPLLSSSSNCCFK</sequence>
<keyword id="KW-1003">Cell membrane</keyword>
<keyword id="KW-0342">GTP-binding</keyword>
<keyword id="KW-0449">Lipoprotein</keyword>
<keyword id="KW-0472">Membrane</keyword>
<keyword id="KW-0547">Nucleotide-binding</keyword>
<keyword id="KW-0636">Prenylation</keyword>
<keyword id="KW-0653">Protein transport</keyword>
<keyword id="KW-1185">Reference proteome</keyword>
<keyword id="KW-0813">Transport</keyword>
<organism>
    <name type="scientific">Arabidopsis thaliana</name>
    <name type="common">Mouse-ear cress</name>
    <dbReference type="NCBI Taxonomy" id="3702"/>
    <lineage>
        <taxon>Eukaryota</taxon>
        <taxon>Viridiplantae</taxon>
        <taxon>Streptophyta</taxon>
        <taxon>Embryophyta</taxon>
        <taxon>Tracheophyta</taxon>
        <taxon>Spermatophyta</taxon>
        <taxon>Magnoliopsida</taxon>
        <taxon>eudicotyledons</taxon>
        <taxon>Gunneridae</taxon>
        <taxon>Pentapetalae</taxon>
        <taxon>rosids</taxon>
        <taxon>malvids</taxon>
        <taxon>Brassicales</taxon>
        <taxon>Brassicaceae</taxon>
        <taxon>Camelineae</taxon>
        <taxon>Arabidopsis</taxon>
    </lineage>
</organism>
<feature type="chain" id="PRO_0000407352" description="Ras-related protein RABA6a">
    <location>
        <begin position="1"/>
        <end position="233"/>
    </location>
</feature>
<feature type="short sequence motif" description="Effector region" evidence="1">
    <location>
        <begin position="42"/>
        <end position="50"/>
    </location>
</feature>
<feature type="binding site" evidence="1">
    <location>
        <begin position="20"/>
        <end position="27"/>
    </location>
    <ligand>
        <name>GTP</name>
        <dbReference type="ChEBI" id="CHEBI:37565"/>
    </ligand>
</feature>
<feature type="binding site" evidence="1">
    <location>
        <begin position="68"/>
        <end position="72"/>
    </location>
    <ligand>
        <name>GTP</name>
        <dbReference type="ChEBI" id="CHEBI:37565"/>
    </ligand>
</feature>
<feature type="binding site" evidence="1">
    <location>
        <begin position="126"/>
        <end position="129"/>
    </location>
    <ligand>
        <name>GTP</name>
        <dbReference type="ChEBI" id="CHEBI:37565"/>
    </ligand>
</feature>
<feature type="binding site" evidence="1">
    <location>
        <begin position="156"/>
        <end position="157"/>
    </location>
    <ligand>
        <name>GTP</name>
        <dbReference type="ChEBI" id="CHEBI:37565"/>
    </ligand>
</feature>
<feature type="lipid moiety-binding region" description="S-geranylgeranyl cysteine" evidence="1">
    <location>
        <position position="230"/>
    </location>
</feature>
<feature type="lipid moiety-binding region" description="S-geranylgeranyl cysteine" evidence="1">
    <location>
        <position position="231"/>
    </location>
</feature>
<name>RAA6A_ARATH</name>
<proteinExistence type="evidence at transcript level"/>
<gene>
    <name type="primary">RABA6A</name>
    <name type="ordered locus">At1g73640</name>
    <name type="ORF">F25P22.5</name>
</gene>
<dbReference type="EMBL" id="AC012679">
    <property type="protein sequence ID" value="AAG52089.1"/>
    <property type="molecule type" value="Genomic_DNA"/>
</dbReference>
<dbReference type="EMBL" id="CP002684">
    <property type="protein sequence ID" value="AEE35488.1"/>
    <property type="molecule type" value="Genomic_DNA"/>
</dbReference>
<dbReference type="EMBL" id="AY084805">
    <property type="protein sequence ID" value="AAM61371.1"/>
    <property type="molecule type" value="mRNA"/>
</dbReference>
<dbReference type="PIR" id="D96763">
    <property type="entry name" value="D96763"/>
</dbReference>
<dbReference type="RefSeq" id="NP_177505.1">
    <property type="nucleotide sequence ID" value="NM_106022.2"/>
</dbReference>
<dbReference type="SMR" id="Q9C9U7"/>
<dbReference type="BioGRID" id="28917">
    <property type="interactions" value="1"/>
</dbReference>
<dbReference type="FunCoup" id="Q9C9U7">
    <property type="interactions" value="104"/>
</dbReference>
<dbReference type="IntAct" id="Q9C9U7">
    <property type="interactions" value="1"/>
</dbReference>
<dbReference type="STRING" id="3702.Q9C9U7"/>
<dbReference type="PaxDb" id="3702-AT1G73640.1"/>
<dbReference type="ProteomicsDB" id="225904"/>
<dbReference type="EnsemblPlants" id="AT1G73640.1">
    <property type="protein sequence ID" value="AT1G73640.1"/>
    <property type="gene ID" value="AT1G73640"/>
</dbReference>
<dbReference type="GeneID" id="843698"/>
<dbReference type="Gramene" id="AT1G73640.1">
    <property type="protein sequence ID" value="AT1G73640.1"/>
    <property type="gene ID" value="AT1G73640"/>
</dbReference>
<dbReference type="KEGG" id="ath:AT1G73640"/>
<dbReference type="Araport" id="AT1G73640"/>
<dbReference type="TAIR" id="AT1G73640">
    <property type="gene designation" value="RABA6A"/>
</dbReference>
<dbReference type="eggNOG" id="KOG0087">
    <property type="taxonomic scope" value="Eukaryota"/>
</dbReference>
<dbReference type="HOGENOM" id="CLU_041217_23_2_1"/>
<dbReference type="InParanoid" id="Q9C9U7"/>
<dbReference type="OMA" id="LEIINMM"/>
<dbReference type="PhylomeDB" id="Q9C9U7"/>
<dbReference type="PRO" id="PR:Q9C9U7"/>
<dbReference type="Proteomes" id="UP000006548">
    <property type="component" value="Chromosome 1"/>
</dbReference>
<dbReference type="ExpressionAtlas" id="Q9C9U7">
    <property type="expression patterns" value="baseline and differential"/>
</dbReference>
<dbReference type="GO" id="GO:0005886">
    <property type="term" value="C:plasma membrane"/>
    <property type="evidence" value="ECO:0007005"/>
    <property type="project" value="TAIR"/>
</dbReference>
<dbReference type="GO" id="GO:0005525">
    <property type="term" value="F:GTP binding"/>
    <property type="evidence" value="ECO:0007669"/>
    <property type="project" value="UniProtKB-KW"/>
</dbReference>
<dbReference type="GO" id="GO:0003924">
    <property type="term" value="F:GTPase activity"/>
    <property type="evidence" value="ECO:0007669"/>
    <property type="project" value="InterPro"/>
</dbReference>
<dbReference type="GO" id="GO:0015031">
    <property type="term" value="P:protein transport"/>
    <property type="evidence" value="ECO:0007669"/>
    <property type="project" value="UniProtKB-KW"/>
</dbReference>
<dbReference type="CDD" id="cd01868">
    <property type="entry name" value="Rab11_like"/>
    <property type="match status" value="1"/>
</dbReference>
<dbReference type="FunFam" id="3.40.50.300:FF:000274">
    <property type="entry name" value="ras-related protein RABA5a"/>
    <property type="match status" value="1"/>
</dbReference>
<dbReference type="Gene3D" id="3.40.50.300">
    <property type="entry name" value="P-loop containing nucleotide triphosphate hydrolases"/>
    <property type="match status" value="1"/>
</dbReference>
<dbReference type="InterPro" id="IPR027417">
    <property type="entry name" value="P-loop_NTPase"/>
</dbReference>
<dbReference type="InterPro" id="IPR050209">
    <property type="entry name" value="Rab_GTPases_membrane_traffic"/>
</dbReference>
<dbReference type="InterPro" id="IPR005225">
    <property type="entry name" value="Small_GTP-bd"/>
</dbReference>
<dbReference type="InterPro" id="IPR001806">
    <property type="entry name" value="Small_GTPase"/>
</dbReference>
<dbReference type="NCBIfam" id="TIGR00231">
    <property type="entry name" value="small_GTP"/>
    <property type="match status" value="1"/>
</dbReference>
<dbReference type="PANTHER" id="PTHR47979">
    <property type="entry name" value="DRAB11-RELATED"/>
    <property type="match status" value="1"/>
</dbReference>
<dbReference type="Pfam" id="PF00071">
    <property type="entry name" value="Ras"/>
    <property type="match status" value="1"/>
</dbReference>
<dbReference type="PRINTS" id="PR00449">
    <property type="entry name" value="RASTRNSFRMNG"/>
</dbReference>
<dbReference type="SMART" id="SM00175">
    <property type="entry name" value="RAB"/>
    <property type="match status" value="1"/>
</dbReference>
<dbReference type="SMART" id="SM00176">
    <property type="entry name" value="RAN"/>
    <property type="match status" value="1"/>
</dbReference>
<dbReference type="SMART" id="SM00173">
    <property type="entry name" value="RAS"/>
    <property type="match status" value="1"/>
</dbReference>
<dbReference type="SMART" id="SM00174">
    <property type="entry name" value="RHO"/>
    <property type="match status" value="1"/>
</dbReference>
<dbReference type="SUPFAM" id="SSF52540">
    <property type="entry name" value="P-loop containing nucleoside triphosphate hydrolases"/>
    <property type="match status" value="1"/>
</dbReference>
<dbReference type="PROSITE" id="PS51419">
    <property type="entry name" value="RAB"/>
    <property type="match status" value="1"/>
</dbReference>
<accession>Q9C9U7</accession>
<reference key="1">
    <citation type="journal article" date="2000" name="Nature">
        <title>Sequence and analysis of chromosome 1 of the plant Arabidopsis thaliana.</title>
        <authorList>
            <person name="Theologis A."/>
            <person name="Ecker J.R."/>
            <person name="Palm C.J."/>
            <person name="Federspiel N.A."/>
            <person name="Kaul S."/>
            <person name="White O."/>
            <person name="Alonso J."/>
            <person name="Altafi H."/>
            <person name="Araujo R."/>
            <person name="Bowman C.L."/>
            <person name="Brooks S.Y."/>
            <person name="Buehler E."/>
            <person name="Chan A."/>
            <person name="Chao Q."/>
            <person name="Chen H."/>
            <person name="Cheuk R.F."/>
            <person name="Chin C.W."/>
            <person name="Chung M.K."/>
            <person name="Conn L."/>
            <person name="Conway A.B."/>
            <person name="Conway A.R."/>
            <person name="Creasy T.H."/>
            <person name="Dewar K."/>
            <person name="Dunn P."/>
            <person name="Etgu P."/>
            <person name="Feldblyum T.V."/>
            <person name="Feng J.-D."/>
            <person name="Fong B."/>
            <person name="Fujii C.Y."/>
            <person name="Gill J.E."/>
            <person name="Goldsmith A.D."/>
            <person name="Haas B."/>
            <person name="Hansen N.F."/>
            <person name="Hughes B."/>
            <person name="Huizar L."/>
            <person name="Hunter J.L."/>
            <person name="Jenkins J."/>
            <person name="Johnson-Hopson C."/>
            <person name="Khan S."/>
            <person name="Khaykin E."/>
            <person name="Kim C.J."/>
            <person name="Koo H.L."/>
            <person name="Kremenetskaia I."/>
            <person name="Kurtz D.B."/>
            <person name="Kwan A."/>
            <person name="Lam B."/>
            <person name="Langin-Hooper S."/>
            <person name="Lee A."/>
            <person name="Lee J.M."/>
            <person name="Lenz C.A."/>
            <person name="Li J.H."/>
            <person name="Li Y.-P."/>
            <person name="Lin X."/>
            <person name="Liu S.X."/>
            <person name="Liu Z.A."/>
            <person name="Luros J.S."/>
            <person name="Maiti R."/>
            <person name="Marziali A."/>
            <person name="Militscher J."/>
            <person name="Miranda M."/>
            <person name="Nguyen M."/>
            <person name="Nierman W.C."/>
            <person name="Osborne B.I."/>
            <person name="Pai G."/>
            <person name="Peterson J."/>
            <person name="Pham P.K."/>
            <person name="Rizzo M."/>
            <person name="Rooney T."/>
            <person name="Rowley D."/>
            <person name="Sakano H."/>
            <person name="Salzberg S.L."/>
            <person name="Schwartz J.R."/>
            <person name="Shinn P."/>
            <person name="Southwick A.M."/>
            <person name="Sun H."/>
            <person name="Tallon L.J."/>
            <person name="Tambunga G."/>
            <person name="Toriumi M.J."/>
            <person name="Town C.D."/>
            <person name="Utterback T."/>
            <person name="Van Aken S."/>
            <person name="Vaysberg M."/>
            <person name="Vysotskaia V.S."/>
            <person name="Walker M."/>
            <person name="Wu D."/>
            <person name="Yu G."/>
            <person name="Fraser C.M."/>
            <person name="Venter J.C."/>
            <person name="Davis R.W."/>
        </authorList>
    </citation>
    <scope>NUCLEOTIDE SEQUENCE [LARGE SCALE GENOMIC DNA]</scope>
    <source>
        <strain>cv. Columbia</strain>
    </source>
</reference>
<reference key="2">
    <citation type="journal article" date="2017" name="Plant J.">
        <title>Araport11: a complete reannotation of the Arabidopsis thaliana reference genome.</title>
        <authorList>
            <person name="Cheng C.Y."/>
            <person name="Krishnakumar V."/>
            <person name="Chan A.P."/>
            <person name="Thibaud-Nissen F."/>
            <person name="Schobel S."/>
            <person name="Town C.D."/>
        </authorList>
    </citation>
    <scope>GENOME REANNOTATION</scope>
    <source>
        <strain>cv. Columbia</strain>
    </source>
</reference>
<reference key="3">
    <citation type="submission" date="2002-03" db="EMBL/GenBank/DDBJ databases">
        <title>Full-length cDNA from Arabidopsis thaliana.</title>
        <authorList>
            <person name="Brover V.V."/>
            <person name="Troukhan M.E."/>
            <person name="Alexandrov N.A."/>
            <person name="Lu Y.-P."/>
            <person name="Flavell R.B."/>
            <person name="Feldmann K.A."/>
        </authorList>
    </citation>
    <scope>NUCLEOTIDE SEQUENCE [LARGE SCALE MRNA]</scope>
</reference>
<reference key="4">
    <citation type="journal article" date="2003" name="Plant Physiol.">
        <title>Analysis of the small GTPase gene superfamily of Arabidopsis.</title>
        <authorList>
            <person name="Vernoud V."/>
            <person name="Horton A.C."/>
            <person name="Yang Z."/>
            <person name="Nielsen E."/>
        </authorList>
    </citation>
    <scope>GENE FAMILY</scope>
    <scope>NOMENCLATURE</scope>
</reference>
<comment type="function">
    <text evidence="1">Intracellular vesicle trafficking and protein transport.</text>
</comment>
<comment type="subcellular location">
    <subcellularLocation>
        <location evidence="2">Cell membrane</location>
        <topology evidence="2">Lipid-anchor</topology>
        <orientation evidence="2">Cytoplasmic side</orientation>
    </subcellularLocation>
</comment>
<comment type="similarity">
    <text evidence="2">Belongs to the small GTPase superfamily. Rab family.</text>
</comment>